<accession>Q5FTV3</accession>
<sequence length="865" mass="96309">MSDTTAPAFDFQDREPFWQNEWKRRNTFAVPDVPPADRPKYYVLEMFPYPSGQLHVGHVRNYTLGDVVARYKRARGFAVMHPMGWDAFGLPAENAARERNVHPGKWTMDNIATMRGTLQRLGFSLDWDREIATCLPEYYGKQQKLFTDMLGAGLVERRDSLVNWDPVDETVLANEQVVDGRGWRSGALIEKKKLSQWFLKITKFAQPLLDDLKTLDRWPERVRTMQERWIGRSEGARVRFALHQPPAGYDEDLDSVEVFTTRPDTLFGLSFIGISAEHPLARKVAESNPQAAAFIEECRRLGTSEEVIEAAEKRGFDTGLRVANPLDPEKTAPVWIANFVLMDYGTGAVFGCPCGDQRDLDFARKYDLPVPQVLLPPGQDAETFVLGKKAVSGDATLFNSGFLDGLDPAAARTKVIERLEGLGAGKGVVNWRLRDWGISRQRYWGCPIPIIHCDTCGPVPVPDEQLPVILPEDVTFDRPGNPLDHHPTWKHVNCPHCGKPAVRETDTFDTFVDSSWYFARFTSPHAETPTVPAAANGWLPVDQYIGGIEHAILHLLYARFFTRAMHETGHLDVDEPFAGLFTQGMVTHESYRDDSGWLYPEEVERQGDQVVRRETGTPVQVGRSEKMSKSKRNTVSPVDIIERYGADTARWFVLSDSPPERDMEWTAAGVAAAARFGQRLHRLVASVAARDAADSAHGATGDDLRRVTHRTIAAVGEALEAFTPNVAVARLHELTSALADAERIEGAGIAAARREAARVLCLLTAPMMPHLAEDMMAVLEPGSALVVERPWPEAEEKWLAVQSVTIGVQILGKLRGTIEVPPNAPKEEVLAAAKSEPNVARLLEGKRLVKEIHVPNRIVNFVVAG</sequence>
<organism>
    <name type="scientific">Gluconobacter oxydans (strain 621H)</name>
    <name type="common">Gluconobacter suboxydans</name>
    <dbReference type="NCBI Taxonomy" id="290633"/>
    <lineage>
        <taxon>Bacteria</taxon>
        <taxon>Pseudomonadati</taxon>
        <taxon>Pseudomonadota</taxon>
        <taxon>Alphaproteobacteria</taxon>
        <taxon>Acetobacterales</taxon>
        <taxon>Acetobacteraceae</taxon>
        <taxon>Gluconobacter</taxon>
    </lineage>
</organism>
<keyword id="KW-0030">Aminoacyl-tRNA synthetase</keyword>
<keyword id="KW-0067">ATP-binding</keyword>
<keyword id="KW-0963">Cytoplasm</keyword>
<keyword id="KW-0436">Ligase</keyword>
<keyword id="KW-0547">Nucleotide-binding</keyword>
<keyword id="KW-0648">Protein biosynthesis</keyword>
<keyword id="KW-1185">Reference proteome</keyword>
<gene>
    <name evidence="1" type="primary">leuS</name>
    <name type="ordered locus">GOX0410</name>
</gene>
<name>SYL_GLUOX</name>
<comment type="catalytic activity">
    <reaction evidence="1">
        <text>tRNA(Leu) + L-leucine + ATP = L-leucyl-tRNA(Leu) + AMP + diphosphate</text>
        <dbReference type="Rhea" id="RHEA:11688"/>
        <dbReference type="Rhea" id="RHEA-COMP:9613"/>
        <dbReference type="Rhea" id="RHEA-COMP:9622"/>
        <dbReference type="ChEBI" id="CHEBI:30616"/>
        <dbReference type="ChEBI" id="CHEBI:33019"/>
        <dbReference type="ChEBI" id="CHEBI:57427"/>
        <dbReference type="ChEBI" id="CHEBI:78442"/>
        <dbReference type="ChEBI" id="CHEBI:78494"/>
        <dbReference type="ChEBI" id="CHEBI:456215"/>
        <dbReference type="EC" id="6.1.1.4"/>
    </reaction>
</comment>
<comment type="subcellular location">
    <subcellularLocation>
        <location evidence="1">Cytoplasm</location>
    </subcellularLocation>
</comment>
<comment type="similarity">
    <text evidence="1">Belongs to the class-I aminoacyl-tRNA synthetase family.</text>
</comment>
<protein>
    <recommendedName>
        <fullName evidence="1">Leucine--tRNA ligase</fullName>
        <ecNumber evidence="1">6.1.1.4</ecNumber>
    </recommendedName>
    <alternativeName>
        <fullName evidence="1">Leucyl-tRNA synthetase</fullName>
        <shortName evidence="1">LeuRS</shortName>
    </alternativeName>
</protein>
<proteinExistence type="inferred from homology"/>
<feature type="chain" id="PRO_1000071111" description="Leucine--tRNA ligase">
    <location>
        <begin position="1"/>
        <end position="865"/>
    </location>
</feature>
<feature type="short sequence motif" description="'HIGH' region">
    <location>
        <begin position="48"/>
        <end position="58"/>
    </location>
</feature>
<feature type="short sequence motif" description="'KMSKS' region">
    <location>
        <begin position="626"/>
        <end position="630"/>
    </location>
</feature>
<feature type="binding site" evidence="1">
    <location>
        <position position="629"/>
    </location>
    <ligand>
        <name>ATP</name>
        <dbReference type="ChEBI" id="CHEBI:30616"/>
    </ligand>
</feature>
<reference key="1">
    <citation type="journal article" date="2005" name="Nat. Biotechnol.">
        <title>Complete genome sequence of the acetic acid bacterium Gluconobacter oxydans.</title>
        <authorList>
            <person name="Prust C."/>
            <person name="Hoffmeister M."/>
            <person name="Liesegang H."/>
            <person name="Wiezer A."/>
            <person name="Fricke W.F."/>
            <person name="Ehrenreich A."/>
            <person name="Gottschalk G."/>
            <person name="Deppenmeier U."/>
        </authorList>
    </citation>
    <scope>NUCLEOTIDE SEQUENCE [LARGE SCALE GENOMIC DNA]</scope>
    <source>
        <strain>621H</strain>
    </source>
</reference>
<evidence type="ECO:0000255" key="1">
    <source>
        <dbReference type="HAMAP-Rule" id="MF_00049"/>
    </source>
</evidence>
<dbReference type="EC" id="6.1.1.4" evidence="1"/>
<dbReference type="EMBL" id="CP000009">
    <property type="protein sequence ID" value="AAW60193.1"/>
    <property type="molecule type" value="Genomic_DNA"/>
</dbReference>
<dbReference type="RefSeq" id="WP_011251994.1">
    <property type="nucleotide sequence ID" value="NC_006677.1"/>
</dbReference>
<dbReference type="SMR" id="Q5FTV3"/>
<dbReference type="STRING" id="290633.GOX0410"/>
<dbReference type="KEGG" id="gox:GOX0410"/>
<dbReference type="eggNOG" id="COG0495">
    <property type="taxonomic scope" value="Bacteria"/>
</dbReference>
<dbReference type="HOGENOM" id="CLU_004427_0_0_5"/>
<dbReference type="Proteomes" id="UP000006375">
    <property type="component" value="Chromosome"/>
</dbReference>
<dbReference type="GO" id="GO:0005829">
    <property type="term" value="C:cytosol"/>
    <property type="evidence" value="ECO:0007669"/>
    <property type="project" value="TreeGrafter"/>
</dbReference>
<dbReference type="GO" id="GO:0002161">
    <property type="term" value="F:aminoacyl-tRNA deacylase activity"/>
    <property type="evidence" value="ECO:0007669"/>
    <property type="project" value="InterPro"/>
</dbReference>
<dbReference type="GO" id="GO:0005524">
    <property type="term" value="F:ATP binding"/>
    <property type="evidence" value="ECO:0007669"/>
    <property type="project" value="UniProtKB-UniRule"/>
</dbReference>
<dbReference type="GO" id="GO:0004823">
    <property type="term" value="F:leucine-tRNA ligase activity"/>
    <property type="evidence" value="ECO:0007669"/>
    <property type="project" value="UniProtKB-UniRule"/>
</dbReference>
<dbReference type="GO" id="GO:0006429">
    <property type="term" value="P:leucyl-tRNA aminoacylation"/>
    <property type="evidence" value="ECO:0007669"/>
    <property type="project" value="UniProtKB-UniRule"/>
</dbReference>
<dbReference type="CDD" id="cd00812">
    <property type="entry name" value="LeuRS_core"/>
    <property type="match status" value="1"/>
</dbReference>
<dbReference type="FunFam" id="1.10.730.10:FF:000002">
    <property type="entry name" value="Leucine--tRNA ligase"/>
    <property type="match status" value="1"/>
</dbReference>
<dbReference type="Gene3D" id="2.20.28.290">
    <property type="match status" value="1"/>
</dbReference>
<dbReference type="Gene3D" id="3.10.20.590">
    <property type="match status" value="1"/>
</dbReference>
<dbReference type="Gene3D" id="3.40.50.620">
    <property type="entry name" value="HUPs"/>
    <property type="match status" value="2"/>
</dbReference>
<dbReference type="Gene3D" id="1.10.730.10">
    <property type="entry name" value="Isoleucyl-tRNA Synthetase, Domain 1"/>
    <property type="match status" value="1"/>
</dbReference>
<dbReference type="Gene3D" id="3.90.740.10">
    <property type="entry name" value="Valyl/Leucyl/Isoleucyl-tRNA synthetase, editing domain"/>
    <property type="match status" value="1"/>
</dbReference>
<dbReference type="HAMAP" id="MF_00049_B">
    <property type="entry name" value="Leu_tRNA_synth_B"/>
    <property type="match status" value="1"/>
</dbReference>
<dbReference type="InterPro" id="IPR001412">
    <property type="entry name" value="aa-tRNA-synth_I_CS"/>
</dbReference>
<dbReference type="InterPro" id="IPR002300">
    <property type="entry name" value="aa-tRNA-synth_Ia"/>
</dbReference>
<dbReference type="InterPro" id="IPR002302">
    <property type="entry name" value="Leu-tRNA-ligase"/>
</dbReference>
<dbReference type="InterPro" id="IPR025709">
    <property type="entry name" value="Leu_tRNA-synth_edit"/>
</dbReference>
<dbReference type="InterPro" id="IPR013155">
    <property type="entry name" value="M/V/L/I-tRNA-synth_anticd-bd"/>
</dbReference>
<dbReference type="InterPro" id="IPR015413">
    <property type="entry name" value="Methionyl/Leucyl_tRNA_Synth"/>
</dbReference>
<dbReference type="InterPro" id="IPR014729">
    <property type="entry name" value="Rossmann-like_a/b/a_fold"/>
</dbReference>
<dbReference type="InterPro" id="IPR009080">
    <property type="entry name" value="tRNAsynth_Ia_anticodon-bd"/>
</dbReference>
<dbReference type="InterPro" id="IPR009008">
    <property type="entry name" value="Val/Leu/Ile-tRNA-synth_edit"/>
</dbReference>
<dbReference type="NCBIfam" id="TIGR00396">
    <property type="entry name" value="leuS_bact"/>
    <property type="match status" value="1"/>
</dbReference>
<dbReference type="PANTHER" id="PTHR43740:SF2">
    <property type="entry name" value="LEUCINE--TRNA LIGASE, MITOCHONDRIAL"/>
    <property type="match status" value="1"/>
</dbReference>
<dbReference type="PANTHER" id="PTHR43740">
    <property type="entry name" value="LEUCYL-TRNA SYNTHETASE"/>
    <property type="match status" value="1"/>
</dbReference>
<dbReference type="Pfam" id="PF08264">
    <property type="entry name" value="Anticodon_1"/>
    <property type="match status" value="1"/>
</dbReference>
<dbReference type="Pfam" id="PF00133">
    <property type="entry name" value="tRNA-synt_1"/>
    <property type="match status" value="2"/>
</dbReference>
<dbReference type="Pfam" id="PF13603">
    <property type="entry name" value="tRNA-synt_1_2"/>
    <property type="match status" value="1"/>
</dbReference>
<dbReference type="Pfam" id="PF09334">
    <property type="entry name" value="tRNA-synt_1g"/>
    <property type="match status" value="1"/>
</dbReference>
<dbReference type="PRINTS" id="PR00985">
    <property type="entry name" value="TRNASYNTHLEU"/>
</dbReference>
<dbReference type="SUPFAM" id="SSF47323">
    <property type="entry name" value="Anticodon-binding domain of a subclass of class I aminoacyl-tRNA synthetases"/>
    <property type="match status" value="1"/>
</dbReference>
<dbReference type="SUPFAM" id="SSF52374">
    <property type="entry name" value="Nucleotidylyl transferase"/>
    <property type="match status" value="1"/>
</dbReference>
<dbReference type="SUPFAM" id="SSF50677">
    <property type="entry name" value="ValRS/IleRS/LeuRS editing domain"/>
    <property type="match status" value="1"/>
</dbReference>
<dbReference type="PROSITE" id="PS00178">
    <property type="entry name" value="AA_TRNA_LIGASE_I"/>
    <property type="match status" value="1"/>
</dbReference>